<accession>Q1R414</accession>
<reference key="1">
    <citation type="journal article" date="2006" name="Proc. Natl. Acad. Sci. U.S.A.">
        <title>Identification of genes subject to positive selection in uropathogenic strains of Escherichia coli: a comparative genomics approach.</title>
        <authorList>
            <person name="Chen S.L."/>
            <person name="Hung C.-S."/>
            <person name="Xu J."/>
            <person name="Reigstad C.S."/>
            <person name="Magrini V."/>
            <person name="Sabo A."/>
            <person name="Blasiar D."/>
            <person name="Bieri T."/>
            <person name="Meyer R.R."/>
            <person name="Ozersky P."/>
            <person name="Armstrong J.R."/>
            <person name="Fulton R.S."/>
            <person name="Latreille J.P."/>
            <person name="Spieth J."/>
            <person name="Hooton T.M."/>
            <person name="Mardis E.R."/>
            <person name="Hultgren S.J."/>
            <person name="Gordon J.I."/>
        </authorList>
    </citation>
    <scope>NUCLEOTIDE SEQUENCE [LARGE SCALE GENOMIC DNA]</scope>
    <source>
        <strain>UTI89 / UPEC</strain>
    </source>
</reference>
<name>RHAS_ECOUT</name>
<dbReference type="EMBL" id="CP000243">
    <property type="protein sequence ID" value="ABE09900.1"/>
    <property type="molecule type" value="Genomic_DNA"/>
</dbReference>
<dbReference type="RefSeq" id="WP_000217149.1">
    <property type="nucleotide sequence ID" value="NZ_CP064825.1"/>
</dbReference>
<dbReference type="SMR" id="Q1R414"/>
<dbReference type="KEGG" id="eci:UTI89_C4488"/>
<dbReference type="HOGENOM" id="CLU_000445_88_5_6"/>
<dbReference type="Proteomes" id="UP000001952">
    <property type="component" value="Chromosome"/>
</dbReference>
<dbReference type="GO" id="GO:0005737">
    <property type="term" value="C:cytoplasm"/>
    <property type="evidence" value="ECO:0007669"/>
    <property type="project" value="UniProtKB-SubCell"/>
</dbReference>
<dbReference type="GO" id="GO:0003700">
    <property type="term" value="F:DNA-binding transcription factor activity"/>
    <property type="evidence" value="ECO:0007669"/>
    <property type="project" value="UniProtKB-UniRule"/>
</dbReference>
<dbReference type="GO" id="GO:0043565">
    <property type="term" value="F:sequence-specific DNA binding"/>
    <property type="evidence" value="ECO:0007669"/>
    <property type="project" value="InterPro"/>
</dbReference>
<dbReference type="GO" id="GO:0045893">
    <property type="term" value="P:positive regulation of DNA-templated transcription"/>
    <property type="evidence" value="ECO:0007669"/>
    <property type="project" value="UniProtKB-UniRule"/>
</dbReference>
<dbReference type="GO" id="GO:0019299">
    <property type="term" value="P:rhamnose metabolic process"/>
    <property type="evidence" value="ECO:0007669"/>
    <property type="project" value="UniProtKB-UniRule"/>
</dbReference>
<dbReference type="CDD" id="cd06977">
    <property type="entry name" value="cupin_RhaR_RhaS-like_N"/>
    <property type="match status" value="1"/>
</dbReference>
<dbReference type="FunFam" id="1.10.10.60:FF:000181">
    <property type="entry name" value="HTH-type transcriptional activator RhaS"/>
    <property type="match status" value="1"/>
</dbReference>
<dbReference type="FunFam" id="2.60.120.10:FF:000041">
    <property type="entry name" value="HTH-type transcriptional activator RhaS"/>
    <property type="match status" value="1"/>
</dbReference>
<dbReference type="Gene3D" id="1.10.10.60">
    <property type="entry name" value="Homeodomain-like"/>
    <property type="match status" value="1"/>
</dbReference>
<dbReference type="Gene3D" id="2.60.120.10">
    <property type="entry name" value="Jelly Rolls"/>
    <property type="match status" value="1"/>
</dbReference>
<dbReference type="HAMAP" id="MF_01534">
    <property type="entry name" value="HTH_type_RhaS"/>
    <property type="match status" value="1"/>
</dbReference>
<dbReference type="InterPro" id="IPR003313">
    <property type="entry name" value="AraC-bd"/>
</dbReference>
<dbReference type="InterPro" id="IPR050204">
    <property type="entry name" value="AraC_XylS_family_regulators"/>
</dbReference>
<dbReference type="InterPro" id="IPR009057">
    <property type="entry name" value="Homeodomain-like_sf"/>
</dbReference>
<dbReference type="InterPro" id="IPR037923">
    <property type="entry name" value="HTH-like"/>
</dbReference>
<dbReference type="InterPro" id="IPR018060">
    <property type="entry name" value="HTH_AraC"/>
</dbReference>
<dbReference type="InterPro" id="IPR018062">
    <property type="entry name" value="HTH_AraC-typ_CS"/>
</dbReference>
<dbReference type="InterPro" id="IPR047220">
    <property type="entry name" value="RhaR_RhaS-like_N"/>
</dbReference>
<dbReference type="InterPro" id="IPR014710">
    <property type="entry name" value="RmlC-like_jellyroll"/>
</dbReference>
<dbReference type="InterPro" id="IPR020449">
    <property type="entry name" value="Tscrpt_reg_AraC-type_HTH"/>
</dbReference>
<dbReference type="InterPro" id="IPR023609">
    <property type="entry name" value="Tscrpt_reg_HTH_RhaS"/>
</dbReference>
<dbReference type="NCBIfam" id="NF010028">
    <property type="entry name" value="PRK13503.1"/>
    <property type="match status" value="1"/>
</dbReference>
<dbReference type="PANTHER" id="PTHR46796:SF13">
    <property type="entry name" value="HTH-TYPE TRANSCRIPTIONAL ACTIVATOR RHAS"/>
    <property type="match status" value="1"/>
</dbReference>
<dbReference type="PANTHER" id="PTHR46796">
    <property type="entry name" value="HTH-TYPE TRANSCRIPTIONAL ACTIVATOR RHAS-RELATED"/>
    <property type="match status" value="1"/>
</dbReference>
<dbReference type="Pfam" id="PF02311">
    <property type="entry name" value="AraC_binding"/>
    <property type="match status" value="1"/>
</dbReference>
<dbReference type="Pfam" id="PF12833">
    <property type="entry name" value="HTH_18"/>
    <property type="match status" value="1"/>
</dbReference>
<dbReference type="PRINTS" id="PR00032">
    <property type="entry name" value="HTHARAC"/>
</dbReference>
<dbReference type="SMART" id="SM00342">
    <property type="entry name" value="HTH_ARAC"/>
    <property type="match status" value="1"/>
</dbReference>
<dbReference type="SUPFAM" id="SSF46689">
    <property type="entry name" value="Homeodomain-like"/>
    <property type="match status" value="2"/>
</dbReference>
<dbReference type="SUPFAM" id="SSF51215">
    <property type="entry name" value="Regulatory protein AraC"/>
    <property type="match status" value="1"/>
</dbReference>
<dbReference type="PROSITE" id="PS00041">
    <property type="entry name" value="HTH_ARAC_FAMILY_1"/>
    <property type="match status" value="1"/>
</dbReference>
<dbReference type="PROSITE" id="PS01124">
    <property type="entry name" value="HTH_ARAC_FAMILY_2"/>
    <property type="match status" value="1"/>
</dbReference>
<evidence type="ECO:0000255" key="1">
    <source>
        <dbReference type="HAMAP-Rule" id="MF_01534"/>
    </source>
</evidence>
<gene>
    <name evidence="1" type="primary">rhaS</name>
    <name type="ordered locus">UTI89_C4488</name>
</gene>
<sequence length="278" mass="32402">MTVLHSVDFFPSGNASVAIEPRLPQADFPEHHHDFHEIVIVEHGTGIHVFNGQPYTITGGTVCFVRDHDRHLYEHTDNLCLTNVLYRSPDRFQFLAGLNQLLPQEQDGQYPSHWRVNHSVLQQVRQLVAQMEQQEEENDLPSTASREILFMQLLLLLRKSSLQENLENSASRLNLLLAWLEDHFADEVNWDAVADQFSLSLRTLHRQLKQKTGLTPQRYLNRLRLMKARHLLRHSEASVTDIAYRCGFSDSNHFSTLFRREFNWSPRDIRQGRDGFLQ</sequence>
<proteinExistence type="inferred from homology"/>
<keyword id="KW-0010">Activator</keyword>
<keyword id="KW-0963">Cytoplasm</keyword>
<keyword id="KW-0238">DNA-binding</keyword>
<keyword id="KW-0677">Repeat</keyword>
<keyword id="KW-0684">Rhamnose metabolism</keyword>
<keyword id="KW-0804">Transcription</keyword>
<keyword id="KW-0805">Transcription regulation</keyword>
<comment type="function">
    <text evidence="1">Activates expression of the rhaBAD and rhaT operons.</text>
</comment>
<comment type="subunit">
    <text evidence="1">Binds DNA as a dimer.</text>
</comment>
<comment type="subcellular location">
    <subcellularLocation>
        <location evidence="1">Cytoplasm</location>
    </subcellularLocation>
</comment>
<protein>
    <recommendedName>
        <fullName evidence="1">HTH-type transcriptional activator RhaS</fullName>
    </recommendedName>
    <alternativeName>
        <fullName evidence="1">L-rhamnose operon regulatory protein RhaS</fullName>
    </alternativeName>
</protein>
<feature type="chain" id="PRO_1000068704" description="HTH-type transcriptional activator RhaS">
    <location>
        <begin position="1"/>
        <end position="278"/>
    </location>
</feature>
<feature type="domain" description="HTH araC/xylS-type" evidence="1">
    <location>
        <begin position="174"/>
        <end position="272"/>
    </location>
</feature>
<feature type="DNA-binding region" description="H-T-H motif" evidence="1">
    <location>
        <begin position="191"/>
        <end position="212"/>
    </location>
</feature>
<feature type="DNA-binding region" description="H-T-H motif" evidence="1">
    <location>
        <begin position="239"/>
        <end position="262"/>
    </location>
</feature>
<feature type="site" description="Interaction with sigma-70" evidence="1">
    <location>
        <position position="241"/>
    </location>
</feature>
<feature type="site" description="Interaction with sigma-70" evidence="1">
    <location>
        <position position="250"/>
    </location>
</feature>
<organism>
    <name type="scientific">Escherichia coli (strain UTI89 / UPEC)</name>
    <dbReference type="NCBI Taxonomy" id="364106"/>
    <lineage>
        <taxon>Bacteria</taxon>
        <taxon>Pseudomonadati</taxon>
        <taxon>Pseudomonadota</taxon>
        <taxon>Gammaproteobacteria</taxon>
        <taxon>Enterobacterales</taxon>
        <taxon>Enterobacteriaceae</taxon>
        <taxon>Escherichia</taxon>
    </lineage>
</organism>